<feature type="chain" id="PRO_0000059493" description="Glycerol kinase">
    <location>
        <begin position="1"/>
        <end position="498"/>
    </location>
</feature>
<feature type="binding site" evidence="1">
    <location>
        <position position="12"/>
    </location>
    <ligand>
        <name>ADP</name>
        <dbReference type="ChEBI" id="CHEBI:456216"/>
    </ligand>
</feature>
<feature type="binding site" evidence="1">
    <location>
        <position position="12"/>
    </location>
    <ligand>
        <name>ATP</name>
        <dbReference type="ChEBI" id="CHEBI:30616"/>
    </ligand>
</feature>
<feature type="binding site" evidence="1">
    <location>
        <position position="12"/>
    </location>
    <ligand>
        <name>sn-glycerol 3-phosphate</name>
        <dbReference type="ChEBI" id="CHEBI:57597"/>
    </ligand>
</feature>
<feature type="binding site" evidence="1">
    <location>
        <position position="13"/>
    </location>
    <ligand>
        <name>ATP</name>
        <dbReference type="ChEBI" id="CHEBI:30616"/>
    </ligand>
</feature>
<feature type="binding site" evidence="1">
    <location>
        <position position="14"/>
    </location>
    <ligand>
        <name>ATP</name>
        <dbReference type="ChEBI" id="CHEBI:30616"/>
    </ligand>
</feature>
<feature type="binding site" evidence="1">
    <location>
        <position position="16"/>
    </location>
    <ligand>
        <name>ADP</name>
        <dbReference type="ChEBI" id="CHEBI:456216"/>
    </ligand>
</feature>
<feature type="binding site" evidence="1">
    <location>
        <position position="82"/>
    </location>
    <ligand>
        <name>glycerol</name>
        <dbReference type="ChEBI" id="CHEBI:17754"/>
    </ligand>
</feature>
<feature type="binding site" evidence="1">
    <location>
        <position position="82"/>
    </location>
    <ligand>
        <name>sn-glycerol 3-phosphate</name>
        <dbReference type="ChEBI" id="CHEBI:57597"/>
    </ligand>
</feature>
<feature type="binding site" evidence="1">
    <location>
        <position position="83"/>
    </location>
    <ligand>
        <name>glycerol</name>
        <dbReference type="ChEBI" id="CHEBI:17754"/>
    </ligand>
</feature>
<feature type="binding site" evidence="1">
    <location>
        <position position="83"/>
    </location>
    <ligand>
        <name>sn-glycerol 3-phosphate</name>
        <dbReference type="ChEBI" id="CHEBI:57597"/>
    </ligand>
</feature>
<feature type="binding site" evidence="1">
    <location>
        <position position="134"/>
    </location>
    <ligand>
        <name>glycerol</name>
        <dbReference type="ChEBI" id="CHEBI:17754"/>
    </ligand>
</feature>
<feature type="binding site" evidence="1">
    <location>
        <position position="134"/>
    </location>
    <ligand>
        <name>sn-glycerol 3-phosphate</name>
        <dbReference type="ChEBI" id="CHEBI:57597"/>
    </ligand>
</feature>
<feature type="binding site" evidence="1">
    <location>
        <position position="244"/>
    </location>
    <ligand>
        <name>glycerol</name>
        <dbReference type="ChEBI" id="CHEBI:17754"/>
    </ligand>
</feature>
<feature type="binding site" evidence="1">
    <location>
        <position position="244"/>
    </location>
    <ligand>
        <name>sn-glycerol 3-phosphate</name>
        <dbReference type="ChEBI" id="CHEBI:57597"/>
    </ligand>
</feature>
<feature type="binding site" evidence="1">
    <location>
        <position position="245"/>
    </location>
    <ligand>
        <name>glycerol</name>
        <dbReference type="ChEBI" id="CHEBI:17754"/>
    </ligand>
</feature>
<feature type="binding site" evidence="1">
    <location>
        <position position="266"/>
    </location>
    <ligand>
        <name>ADP</name>
        <dbReference type="ChEBI" id="CHEBI:456216"/>
    </ligand>
</feature>
<feature type="binding site" evidence="1">
    <location>
        <position position="266"/>
    </location>
    <ligand>
        <name>ATP</name>
        <dbReference type="ChEBI" id="CHEBI:30616"/>
    </ligand>
</feature>
<feature type="binding site" evidence="1">
    <location>
        <position position="309"/>
    </location>
    <ligand>
        <name>ADP</name>
        <dbReference type="ChEBI" id="CHEBI:456216"/>
    </ligand>
</feature>
<feature type="binding site" evidence="1">
    <location>
        <position position="309"/>
    </location>
    <ligand>
        <name>ATP</name>
        <dbReference type="ChEBI" id="CHEBI:30616"/>
    </ligand>
</feature>
<feature type="binding site" evidence="1">
    <location>
        <position position="313"/>
    </location>
    <ligand>
        <name>ATP</name>
        <dbReference type="ChEBI" id="CHEBI:30616"/>
    </ligand>
</feature>
<feature type="binding site" evidence="1">
    <location>
        <position position="410"/>
    </location>
    <ligand>
        <name>ADP</name>
        <dbReference type="ChEBI" id="CHEBI:456216"/>
    </ligand>
</feature>
<feature type="binding site" evidence="1">
    <location>
        <position position="410"/>
    </location>
    <ligand>
        <name>ATP</name>
        <dbReference type="ChEBI" id="CHEBI:30616"/>
    </ligand>
</feature>
<feature type="binding site" evidence="1">
    <location>
        <position position="414"/>
    </location>
    <ligand>
        <name>ADP</name>
        <dbReference type="ChEBI" id="CHEBI:456216"/>
    </ligand>
</feature>
<feature type="modified residue" description="Phosphohistidine; by HPr" evidence="1">
    <location>
        <position position="230"/>
    </location>
</feature>
<comment type="function">
    <text evidence="1">Key enzyme in the regulation of glycerol uptake and metabolism. Catalyzes the phosphorylation of glycerol to yield sn-glycerol 3-phosphate.</text>
</comment>
<comment type="catalytic activity">
    <reaction evidence="1">
        <text>glycerol + ATP = sn-glycerol 3-phosphate + ADP + H(+)</text>
        <dbReference type="Rhea" id="RHEA:21644"/>
        <dbReference type="ChEBI" id="CHEBI:15378"/>
        <dbReference type="ChEBI" id="CHEBI:17754"/>
        <dbReference type="ChEBI" id="CHEBI:30616"/>
        <dbReference type="ChEBI" id="CHEBI:57597"/>
        <dbReference type="ChEBI" id="CHEBI:456216"/>
        <dbReference type="EC" id="2.7.1.30"/>
    </reaction>
</comment>
<comment type="activity regulation">
    <text evidence="1">Activated by phosphorylation and inhibited by fructose 1,6-bisphosphate (FBP).</text>
</comment>
<comment type="pathway">
    <text evidence="1">Polyol metabolism; glycerol degradation via glycerol kinase pathway; sn-glycerol 3-phosphate from glycerol: step 1/1.</text>
</comment>
<comment type="subunit">
    <text evidence="1">Homotetramer and homodimer (in equilibrium).</text>
</comment>
<comment type="PTM">
    <text evidence="1">The phosphoenolpyruvate-dependent sugar phosphotransferase system (PTS), including enzyme I, and histidine-containing protein (HPr) are required for the phosphorylation, which leads to the activation of the enzyme.</text>
</comment>
<comment type="similarity">
    <text evidence="1">Belongs to the FGGY kinase family.</text>
</comment>
<accession>Q6G9R3</accession>
<name>GLPK_STAAS</name>
<keyword id="KW-0067">ATP-binding</keyword>
<keyword id="KW-0319">Glycerol metabolism</keyword>
<keyword id="KW-0418">Kinase</keyword>
<keyword id="KW-0547">Nucleotide-binding</keyword>
<keyword id="KW-0597">Phosphoprotein</keyword>
<keyword id="KW-0808">Transferase</keyword>
<protein>
    <recommendedName>
        <fullName evidence="1">Glycerol kinase</fullName>
        <ecNumber evidence="1">2.7.1.30</ecNumber>
    </recommendedName>
    <alternativeName>
        <fullName evidence="1">ATP:glycerol 3-phosphotransferase</fullName>
    </alternativeName>
    <alternativeName>
        <fullName evidence="1">Glycerokinase</fullName>
        <shortName evidence="1">GK</shortName>
    </alternativeName>
</protein>
<evidence type="ECO:0000255" key="1">
    <source>
        <dbReference type="HAMAP-Rule" id="MF_00186"/>
    </source>
</evidence>
<proteinExistence type="inferred from homology"/>
<sequence length="498" mass="55638">MEKYILSIDQGTTSSRAILFNQKGEIAGVAQREFKQYFPQSGWVEHDANEIWTSVLAVMTEVINENDVRADQIAGIGITNQRETTVVWDKHTGRPIYHAIVWQSRQTQSICSELKQQGYEQTFRDKTGLLLDPYFAGTKVKWILDNVEGAREKAENGDLLFGTIDTWLVWKLSGKAAHITDYSNASRTLMFNIHDLEWDDELLELLTVPKNMLPEVKPSSEVYGKTIDYHFYGQEVPIAGVAGDQQAALFGQACFERGDVKNTYGTGGFMLMNTGDKAVKSESGLLTTIAYGIDGKVNYALEGSIFVSGSAIQWLRDGLRMINSAPQSESYATRVDSTEGVYVVPAFVGLGTPYWDSEARGAIFGLSRGTEKEHFIRATIESLCYQTRDVMEAMSKDSGIDVQSLRVDGGAVKNNFIMQFQADIVNTSVERPEIQETTALGAAFLAGLAVGFWESKDDIAKNWKLEEKFDPKMDEGEREKLYRGWKKAVEATQVFKTE</sequence>
<reference key="1">
    <citation type="journal article" date="2004" name="Proc. Natl. Acad. Sci. U.S.A.">
        <title>Complete genomes of two clinical Staphylococcus aureus strains: evidence for the rapid evolution of virulence and drug resistance.</title>
        <authorList>
            <person name="Holden M.T.G."/>
            <person name="Feil E.J."/>
            <person name="Lindsay J.A."/>
            <person name="Peacock S.J."/>
            <person name="Day N.P.J."/>
            <person name="Enright M.C."/>
            <person name="Foster T.J."/>
            <person name="Moore C.E."/>
            <person name="Hurst L."/>
            <person name="Atkin R."/>
            <person name="Barron A."/>
            <person name="Bason N."/>
            <person name="Bentley S.D."/>
            <person name="Chillingworth C."/>
            <person name="Chillingworth T."/>
            <person name="Churcher C."/>
            <person name="Clark L."/>
            <person name="Corton C."/>
            <person name="Cronin A."/>
            <person name="Doggett J."/>
            <person name="Dowd L."/>
            <person name="Feltwell T."/>
            <person name="Hance Z."/>
            <person name="Harris B."/>
            <person name="Hauser H."/>
            <person name="Holroyd S."/>
            <person name="Jagels K."/>
            <person name="James K.D."/>
            <person name="Lennard N."/>
            <person name="Line A."/>
            <person name="Mayes R."/>
            <person name="Moule S."/>
            <person name="Mungall K."/>
            <person name="Ormond D."/>
            <person name="Quail M.A."/>
            <person name="Rabbinowitsch E."/>
            <person name="Rutherford K.M."/>
            <person name="Sanders M."/>
            <person name="Sharp S."/>
            <person name="Simmonds M."/>
            <person name="Stevens K."/>
            <person name="Whitehead S."/>
            <person name="Barrell B.G."/>
            <person name="Spratt B.G."/>
            <person name="Parkhill J."/>
        </authorList>
    </citation>
    <scope>NUCLEOTIDE SEQUENCE [LARGE SCALE GENOMIC DNA]</scope>
    <source>
        <strain>MSSA476</strain>
    </source>
</reference>
<dbReference type="EC" id="2.7.1.30" evidence="1"/>
<dbReference type="EMBL" id="BX571857">
    <property type="protein sequence ID" value="CAG43011.1"/>
    <property type="molecule type" value="Genomic_DNA"/>
</dbReference>
<dbReference type="RefSeq" id="WP_000417375.1">
    <property type="nucleotide sequence ID" value="NC_002953.3"/>
</dbReference>
<dbReference type="SMR" id="Q6G9R3"/>
<dbReference type="KEGG" id="sas:SAS1233"/>
<dbReference type="HOGENOM" id="CLU_009281_2_3_9"/>
<dbReference type="UniPathway" id="UPA00618">
    <property type="reaction ID" value="UER00672"/>
</dbReference>
<dbReference type="GO" id="GO:0005829">
    <property type="term" value="C:cytosol"/>
    <property type="evidence" value="ECO:0007669"/>
    <property type="project" value="TreeGrafter"/>
</dbReference>
<dbReference type="GO" id="GO:0005524">
    <property type="term" value="F:ATP binding"/>
    <property type="evidence" value="ECO:0007669"/>
    <property type="project" value="UniProtKB-UniRule"/>
</dbReference>
<dbReference type="GO" id="GO:0004370">
    <property type="term" value="F:glycerol kinase activity"/>
    <property type="evidence" value="ECO:0000250"/>
    <property type="project" value="UniProtKB"/>
</dbReference>
<dbReference type="GO" id="GO:0019563">
    <property type="term" value="P:glycerol catabolic process"/>
    <property type="evidence" value="ECO:0007669"/>
    <property type="project" value="UniProtKB-UniRule"/>
</dbReference>
<dbReference type="GO" id="GO:0006071">
    <property type="term" value="P:glycerol metabolic process"/>
    <property type="evidence" value="ECO:0000250"/>
    <property type="project" value="UniProtKB"/>
</dbReference>
<dbReference type="GO" id="GO:0006072">
    <property type="term" value="P:glycerol-3-phosphate metabolic process"/>
    <property type="evidence" value="ECO:0007669"/>
    <property type="project" value="InterPro"/>
</dbReference>
<dbReference type="CDD" id="cd07786">
    <property type="entry name" value="FGGY_EcGK_like"/>
    <property type="match status" value="1"/>
</dbReference>
<dbReference type="FunFam" id="3.30.420.40:FF:000007">
    <property type="entry name" value="Glycerol kinase"/>
    <property type="match status" value="1"/>
</dbReference>
<dbReference type="FunFam" id="3.30.420.40:FF:000008">
    <property type="entry name" value="Glycerol kinase"/>
    <property type="match status" value="1"/>
</dbReference>
<dbReference type="Gene3D" id="3.30.420.40">
    <property type="match status" value="2"/>
</dbReference>
<dbReference type="HAMAP" id="MF_00186">
    <property type="entry name" value="Glycerol_kin"/>
    <property type="match status" value="1"/>
</dbReference>
<dbReference type="InterPro" id="IPR043129">
    <property type="entry name" value="ATPase_NBD"/>
</dbReference>
<dbReference type="InterPro" id="IPR000577">
    <property type="entry name" value="Carb_kinase_FGGY"/>
</dbReference>
<dbReference type="InterPro" id="IPR018483">
    <property type="entry name" value="Carb_kinase_FGGY_CS"/>
</dbReference>
<dbReference type="InterPro" id="IPR018485">
    <property type="entry name" value="FGGY_C"/>
</dbReference>
<dbReference type="InterPro" id="IPR018484">
    <property type="entry name" value="FGGY_N"/>
</dbReference>
<dbReference type="InterPro" id="IPR005999">
    <property type="entry name" value="Glycerol_kin"/>
</dbReference>
<dbReference type="NCBIfam" id="TIGR01311">
    <property type="entry name" value="glycerol_kin"/>
    <property type="match status" value="1"/>
</dbReference>
<dbReference type="NCBIfam" id="NF000756">
    <property type="entry name" value="PRK00047.1"/>
    <property type="match status" value="1"/>
</dbReference>
<dbReference type="PANTHER" id="PTHR10196:SF69">
    <property type="entry name" value="GLYCEROL KINASE"/>
    <property type="match status" value="1"/>
</dbReference>
<dbReference type="PANTHER" id="PTHR10196">
    <property type="entry name" value="SUGAR KINASE"/>
    <property type="match status" value="1"/>
</dbReference>
<dbReference type="Pfam" id="PF02782">
    <property type="entry name" value="FGGY_C"/>
    <property type="match status" value="1"/>
</dbReference>
<dbReference type="Pfam" id="PF00370">
    <property type="entry name" value="FGGY_N"/>
    <property type="match status" value="1"/>
</dbReference>
<dbReference type="PIRSF" id="PIRSF000538">
    <property type="entry name" value="GlpK"/>
    <property type="match status" value="1"/>
</dbReference>
<dbReference type="SUPFAM" id="SSF53067">
    <property type="entry name" value="Actin-like ATPase domain"/>
    <property type="match status" value="2"/>
</dbReference>
<dbReference type="PROSITE" id="PS00445">
    <property type="entry name" value="FGGY_KINASES_2"/>
    <property type="match status" value="1"/>
</dbReference>
<organism>
    <name type="scientific">Staphylococcus aureus (strain MSSA476)</name>
    <dbReference type="NCBI Taxonomy" id="282459"/>
    <lineage>
        <taxon>Bacteria</taxon>
        <taxon>Bacillati</taxon>
        <taxon>Bacillota</taxon>
        <taxon>Bacilli</taxon>
        <taxon>Bacillales</taxon>
        <taxon>Staphylococcaceae</taxon>
        <taxon>Staphylococcus</taxon>
    </lineage>
</organism>
<gene>
    <name evidence="1" type="primary">glpK</name>
    <name type="ordered locus">SAS1233</name>
</gene>